<dbReference type="EC" id="5.1.1.7" evidence="1"/>
<dbReference type="EMBL" id="CU459141">
    <property type="protein sequence ID" value="CAM85811.1"/>
    <property type="molecule type" value="Genomic_DNA"/>
</dbReference>
<dbReference type="RefSeq" id="WP_000923484.1">
    <property type="nucleotide sequence ID" value="NZ_JBDGFB010000021.1"/>
</dbReference>
<dbReference type="SMR" id="B0VDN4"/>
<dbReference type="EnsemblBacteria" id="CAM85811">
    <property type="protein sequence ID" value="CAM85811"/>
    <property type="gene ID" value="ABAYE0861"/>
</dbReference>
<dbReference type="GeneID" id="92894906"/>
<dbReference type="KEGG" id="aby:ABAYE0861"/>
<dbReference type="HOGENOM" id="CLU_053306_1_1_6"/>
<dbReference type="UniPathway" id="UPA00034">
    <property type="reaction ID" value="UER00025"/>
</dbReference>
<dbReference type="GO" id="GO:0005829">
    <property type="term" value="C:cytosol"/>
    <property type="evidence" value="ECO:0007669"/>
    <property type="project" value="TreeGrafter"/>
</dbReference>
<dbReference type="GO" id="GO:0008837">
    <property type="term" value="F:diaminopimelate epimerase activity"/>
    <property type="evidence" value="ECO:0007669"/>
    <property type="project" value="UniProtKB-UniRule"/>
</dbReference>
<dbReference type="GO" id="GO:0009089">
    <property type="term" value="P:lysine biosynthetic process via diaminopimelate"/>
    <property type="evidence" value="ECO:0007669"/>
    <property type="project" value="UniProtKB-UniRule"/>
</dbReference>
<dbReference type="FunFam" id="3.10.310.10:FF:000001">
    <property type="entry name" value="Diaminopimelate epimerase"/>
    <property type="match status" value="1"/>
</dbReference>
<dbReference type="FunFam" id="3.10.310.10:FF:000004">
    <property type="entry name" value="Diaminopimelate epimerase"/>
    <property type="match status" value="1"/>
</dbReference>
<dbReference type="Gene3D" id="3.10.310.10">
    <property type="entry name" value="Diaminopimelate Epimerase, Chain A, domain 1"/>
    <property type="match status" value="2"/>
</dbReference>
<dbReference type="HAMAP" id="MF_00197">
    <property type="entry name" value="DAP_epimerase"/>
    <property type="match status" value="1"/>
</dbReference>
<dbReference type="InterPro" id="IPR018510">
    <property type="entry name" value="DAP_epimerase_AS"/>
</dbReference>
<dbReference type="InterPro" id="IPR001653">
    <property type="entry name" value="DAP_epimerase_DapF"/>
</dbReference>
<dbReference type="NCBIfam" id="TIGR00652">
    <property type="entry name" value="DapF"/>
    <property type="match status" value="1"/>
</dbReference>
<dbReference type="PANTHER" id="PTHR31689:SF0">
    <property type="entry name" value="DIAMINOPIMELATE EPIMERASE"/>
    <property type="match status" value="1"/>
</dbReference>
<dbReference type="PANTHER" id="PTHR31689">
    <property type="entry name" value="DIAMINOPIMELATE EPIMERASE, CHLOROPLASTIC"/>
    <property type="match status" value="1"/>
</dbReference>
<dbReference type="Pfam" id="PF01678">
    <property type="entry name" value="DAP_epimerase"/>
    <property type="match status" value="2"/>
</dbReference>
<dbReference type="SUPFAM" id="SSF54506">
    <property type="entry name" value="Diaminopimelate epimerase-like"/>
    <property type="match status" value="1"/>
</dbReference>
<dbReference type="PROSITE" id="PS01326">
    <property type="entry name" value="DAP_EPIMERASE"/>
    <property type="match status" value="1"/>
</dbReference>
<organism>
    <name type="scientific">Acinetobacter baumannii (strain AYE)</name>
    <dbReference type="NCBI Taxonomy" id="509173"/>
    <lineage>
        <taxon>Bacteria</taxon>
        <taxon>Pseudomonadati</taxon>
        <taxon>Pseudomonadota</taxon>
        <taxon>Gammaproteobacteria</taxon>
        <taxon>Moraxellales</taxon>
        <taxon>Moraxellaceae</taxon>
        <taxon>Acinetobacter</taxon>
        <taxon>Acinetobacter calcoaceticus/baumannii complex</taxon>
    </lineage>
</organism>
<name>DAPF_ACIBY</name>
<keyword id="KW-0028">Amino-acid biosynthesis</keyword>
<keyword id="KW-0963">Cytoplasm</keyword>
<keyword id="KW-0413">Isomerase</keyword>
<keyword id="KW-0457">Lysine biosynthesis</keyword>
<feature type="chain" id="PRO_1000099215" description="Diaminopimelate epimerase">
    <location>
        <begin position="1"/>
        <end position="281"/>
    </location>
</feature>
<feature type="active site" description="Proton donor" evidence="1">
    <location>
        <position position="75"/>
    </location>
</feature>
<feature type="active site" description="Proton acceptor" evidence="1">
    <location>
        <position position="220"/>
    </location>
</feature>
<feature type="binding site" evidence="1">
    <location>
        <position position="13"/>
    </location>
    <ligand>
        <name>substrate</name>
    </ligand>
</feature>
<feature type="binding site" evidence="1">
    <location>
        <position position="46"/>
    </location>
    <ligand>
        <name>substrate</name>
    </ligand>
</feature>
<feature type="binding site" evidence="1">
    <location>
        <position position="66"/>
    </location>
    <ligand>
        <name>substrate</name>
    </ligand>
</feature>
<feature type="binding site" evidence="1">
    <location>
        <begin position="76"/>
        <end position="77"/>
    </location>
    <ligand>
        <name>substrate</name>
    </ligand>
</feature>
<feature type="binding site" evidence="1">
    <location>
        <position position="160"/>
    </location>
    <ligand>
        <name>substrate</name>
    </ligand>
</feature>
<feature type="binding site" evidence="1">
    <location>
        <position position="193"/>
    </location>
    <ligand>
        <name>substrate</name>
    </ligand>
</feature>
<feature type="binding site" evidence="1">
    <location>
        <begin position="211"/>
        <end position="212"/>
    </location>
    <ligand>
        <name>substrate</name>
    </ligand>
</feature>
<feature type="binding site" evidence="1">
    <location>
        <begin position="221"/>
        <end position="222"/>
    </location>
    <ligand>
        <name>substrate</name>
    </ligand>
</feature>
<feature type="site" description="Could be important to modulate the pK values of the two catalytic cysteine residues" evidence="1">
    <location>
        <position position="162"/>
    </location>
</feature>
<feature type="site" description="Could be important to modulate the pK values of the two catalytic cysteine residues" evidence="1">
    <location>
        <position position="211"/>
    </location>
</feature>
<feature type="site" description="Important for dimerization" evidence="1">
    <location>
        <position position="270"/>
    </location>
</feature>
<reference key="1">
    <citation type="journal article" date="2008" name="PLoS ONE">
        <title>Comparative analysis of Acinetobacters: three genomes for three lifestyles.</title>
        <authorList>
            <person name="Vallenet D."/>
            <person name="Nordmann P."/>
            <person name="Barbe V."/>
            <person name="Poirel L."/>
            <person name="Mangenot S."/>
            <person name="Bataille E."/>
            <person name="Dossat C."/>
            <person name="Gas S."/>
            <person name="Kreimeyer A."/>
            <person name="Lenoble P."/>
            <person name="Oztas S."/>
            <person name="Poulain J."/>
            <person name="Segurens B."/>
            <person name="Robert C."/>
            <person name="Abergel C."/>
            <person name="Claverie J.-M."/>
            <person name="Raoult D."/>
            <person name="Medigue C."/>
            <person name="Weissenbach J."/>
            <person name="Cruveiller S."/>
        </authorList>
    </citation>
    <scope>NUCLEOTIDE SEQUENCE [LARGE SCALE GENOMIC DNA]</scope>
    <source>
        <strain>AYE</strain>
    </source>
</reference>
<accession>B0VDN4</accession>
<sequence>MLLEFTKMHGLGNDFMVVDLISQRAYLDTATIQRLADRHFGVGFDQLLIVEPPDVPEADFKYRIFNADGSEVEQCGNGVRCFARFVHERHLTNKTNITVQTKAGIVKPELGQNGWVRVNMGYPKFLPNEIPFVAEEPEALYTLELANDQNISIDVVNMGNPHAVTIVPDVLTADVAGIGPQVESHKRFPERVNAGFMQVIDDKHVRLRVFERGVGETLACGTGACAAAVSGMRRGLLANSVEVELAGGKLQIEWQEGDVVWMTGPTTHVYDGRLDLRYFQG</sequence>
<comment type="function">
    <text evidence="1">Catalyzes the stereoinversion of LL-2,6-diaminopimelate (L,L-DAP) to meso-diaminopimelate (meso-DAP), a precursor of L-lysine and an essential component of the bacterial peptidoglycan.</text>
</comment>
<comment type="catalytic activity">
    <reaction evidence="1">
        <text>(2S,6S)-2,6-diaminopimelate = meso-2,6-diaminopimelate</text>
        <dbReference type="Rhea" id="RHEA:15393"/>
        <dbReference type="ChEBI" id="CHEBI:57609"/>
        <dbReference type="ChEBI" id="CHEBI:57791"/>
        <dbReference type="EC" id="5.1.1.7"/>
    </reaction>
</comment>
<comment type="pathway">
    <text evidence="1">Amino-acid biosynthesis; L-lysine biosynthesis via DAP pathway; DL-2,6-diaminopimelate from LL-2,6-diaminopimelate: step 1/1.</text>
</comment>
<comment type="subunit">
    <text evidence="1">Homodimer.</text>
</comment>
<comment type="subcellular location">
    <subcellularLocation>
        <location evidence="1">Cytoplasm</location>
    </subcellularLocation>
</comment>
<comment type="similarity">
    <text evidence="1">Belongs to the diaminopimelate epimerase family.</text>
</comment>
<protein>
    <recommendedName>
        <fullName evidence="1">Diaminopimelate epimerase</fullName>
        <shortName evidence="1">DAP epimerase</shortName>
        <ecNumber evidence="1">5.1.1.7</ecNumber>
    </recommendedName>
    <alternativeName>
        <fullName evidence="1">PLP-independent amino acid racemase</fullName>
    </alternativeName>
</protein>
<gene>
    <name evidence="1" type="primary">dapF</name>
    <name type="ordered locus">ABAYE0861</name>
</gene>
<proteinExistence type="inferred from homology"/>
<evidence type="ECO:0000255" key="1">
    <source>
        <dbReference type="HAMAP-Rule" id="MF_00197"/>
    </source>
</evidence>